<keyword id="KW-0238">DNA-binding</keyword>
<keyword id="KW-0371">Homeobox</keyword>
<keyword id="KW-0479">Metal-binding</keyword>
<keyword id="KW-0539">Nucleus</keyword>
<keyword id="KW-0611">Plant defense</keyword>
<keyword id="KW-0677">Repeat</keyword>
<keyword id="KW-0804">Transcription</keyword>
<keyword id="KW-0805">Transcription regulation</keyword>
<keyword id="KW-0862">Zinc</keyword>
<keyword id="KW-0863">Zinc-finger</keyword>
<accession>P48786</accession>
<comment type="function">
    <text>Specifically binds to the fungal elicitor-responsive DNA element, 5'-CTAATTGTTTA-3', of the gene PR2 promoter.</text>
</comment>
<comment type="subcellular location">
    <subcellularLocation>
        <location>Nucleus</location>
    </subcellularLocation>
</comment>
<comment type="induction">
    <text>By pathogen infection.</text>
</comment>
<comment type="similarity">
    <text evidence="4">Belongs to the PHD-associated homeobox family.</text>
</comment>
<dbReference type="EMBL" id="L21975">
    <property type="protein sequence ID" value="AAA62237.1"/>
    <property type="molecule type" value="mRNA"/>
</dbReference>
<dbReference type="PIR" id="T14917">
    <property type="entry name" value="T14917"/>
</dbReference>
<dbReference type="SMR" id="P48786"/>
<dbReference type="GO" id="GO:0005634">
    <property type="term" value="C:nucleus"/>
    <property type="evidence" value="ECO:0007669"/>
    <property type="project" value="UniProtKB-SubCell"/>
</dbReference>
<dbReference type="GO" id="GO:0003682">
    <property type="term" value="F:chromatin binding"/>
    <property type="evidence" value="ECO:0007669"/>
    <property type="project" value="TreeGrafter"/>
</dbReference>
<dbReference type="GO" id="GO:0003677">
    <property type="term" value="F:DNA binding"/>
    <property type="evidence" value="ECO:0007669"/>
    <property type="project" value="UniProtKB-KW"/>
</dbReference>
<dbReference type="GO" id="GO:0008270">
    <property type="term" value="F:zinc ion binding"/>
    <property type="evidence" value="ECO:0007669"/>
    <property type="project" value="UniProtKB-KW"/>
</dbReference>
<dbReference type="GO" id="GO:0006952">
    <property type="term" value="P:defense response"/>
    <property type="evidence" value="ECO:0007669"/>
    <property type="project" value="UniProtKB-KW"/>
</dbReference>
<dbReference type="GO" id="GO:0045814">
    <property type="term" value="P:negative regulation of gene expression, epigenetic"/>
    <property type="evidence" value="ECO:0007669"/>
    <property type="project" value="TreeGrafter"/>
</dbReference>
<dbReference type="GO" id="GO:0006355">
    <property type="term" value="P:regulation of DNA-templated transcription"/>
    <property type="evidence" value="ECO:0007669"/>
    <property type="project" value="InterPro"/>
</dbReference>
<dbReference type="CDD" id="cd00086">
    <property type="entry name" value="homeodomain"/>
    <property type="match status" value="1"/>
</dbReference>
<dbReference type="CDD" id="cd15504">
    <property type="entry name" value="PHD_PRHA_like"/>
    <property type="match status" value="1"/>
</dbReference>
<dbReference type="FunFam" id="3.30.40.10:FF:000270">
    <property type="entry name" value="pathogenesis-related homeodomain protein-like"/>
    <property type="match status" value="1"/>
</dbReference>
<dbReference type="Gene3D" id="1.10.10.60">
    <property type="entry name" value="Homeodomain-like"/>
    <property type="match status" value="1"/>
</dbReference>
<dbReference type="Gene3D" id="3.30.40.10">
    <property type="entry name" value="Zinc/RING finger domain, C3HC4 (zinc finger)"/>
    <property type="match status" value="1"/>
</dbReference>
<dbReference type="InterPro" id="IPR017956">
    <property type="entry name" value="AT_hook_DNA-bd_motif"/>
</dbReference>
<dbReference type="InterPro" id="IPR001356">
    <property type="entry name" value="HD"/>
</dbReference>
<dbReference type="InterPro" id="IPR000637">
    <property type="entry name" value="HMGI/Y_DNA-bd_CS"/>
</dbReference>
<dbReference type="InterPro" id="IPR009057">
    <property type="entry name" value="Homeodomain-like_sf"/>
</dbReference>
<dbReference type="InterPro" id="IPR045876">
    <property type="entry name" value="PRHA-like_PHD-finger"/>
</dbReference>
<dbReference type="InterPro" id="IPR019786">
    <property type="entry name" value="Zinc_finger_PHD-type_CS"/>
</dbReference>
<dbReference type="InterPro" id="IPR011011">
    <property type="entry name" value="Znf_FYVE_PHD"/>
</dbReference>
<dbReference type="InterPro" id="IPR001965">
    <property type="entry name" value="Znf_PHD"/>
</dbReference>
<dbReference type="InterPro" id="IPR019787">
    <property type="entry name" value="Znf_PHD-finger"/>
</dbReference>
<dbReference type="InterPro" id="IPR013083">
    <property type="entry name" value="Znf_RING/FYVE/PHD"/>
</dbReference>
<dbReference type="PANTHER" id="PTHR12628:SF13">
    <property type="entry name" value="HOMEOBOX PROTEIN HAT3.1"/>
    <property type="match status" value="1"/>
</dbReference>
<dbReference type="PANTHER" id="PTHR12628">
    <property type="entry name" value="POLYCOMB-LIKE TRANSCRIPTION FACTOR"/>
    <property type="match status" value="1"/>
</dbReference>
<dbReference type="Pfam" id="PF02178">
    <property type="entry name" value="AT_hook"/>
    <property type="match status" value="4"/>
</dbReference>
<dbReference type="Pfam" id="PF00046">
    <property type="entry name" value="Homeodomain"/>
    <property type="match status" value="1"/>
</dbReference>
<dbReference type="Pfam" id="PF00628">
    <property type="entry name" value="PHD"/>
    <property type="match status" value="1"/>
</dbReference>
<dbReference type="PRINTS" id="PR00929">
    <property type="entry name" value="ATHOOK"/>
</dbReference>
<dbReference type="SMART" id="SM00384">
    <property type="entry name" value="AT_hook"/>
    <property type="match status" value="4"/>
</dbReference>
<dbReference type="SMART" id="SM00389">
    <property type="entry name" value="HOX"/>
    <property type="match status" value="1"/>
</dbReference>
<dbReference type="SMART" id="SM00249">
    <property type="entry name" value="PHD"/>
    <property type="match status" value="1"/>
</dbReference>
<dbReference type="SUPFAM" id="SSF57903">
    <property type="entry name" value="FYVE/PHD zinc finger"/>
    <property type="match status" value="1"/>
</dbReference>
<dbReference type="SUPFAM" id="SSF46689">
    <property type="entry name" value="Homeodomain-like"/>
    <property type="match status" value="1"/>
</dbReference>
<dbReference type="PROSITE" id="PS00354">
    <property type="entry name" value="HMGI_Y"/>
    <property type="match status" value="2"/>
</dbReference>
<dbReference type="PROSITE" id="PS00027">
    <property type="entry name" value="HOMEOBOX_1"/>
    <property type="match status" value="1"/>
</dbReference>
<dbReference type="PROSITE" id="PS50071">
    <property type="entry name" value="HOMEOBOX_2"/>
    <property type="match status" value="1"/>
</dbReference>
<dbReference type="PROSITE" id="PS01359">
    <property type="entry name" value="ZF_PHD_1"/>
    <property type="match status" value="1"/>
</dbReference>
<dbReference type="PROSITE" id="PS50016">
    <property type="entry name" value="ZF_PHD_2"/>
    <property type="match status" value="1"/>
</dbReference>
<feature type="chain" id="PRO_0000049265" description="Pathogenesis-related homeodomain protein">
    <location>
        <begin position="1"/>
        <end position="1088"/>
    </location>
</feature>
<feature type="repeat" description="1-1">
    <location>
        <begin position="140"/>
        <end position="152"/>
    </location>
</feature>
<feature type="repeat" description="2-1">
    <location>
        <begin position="173"/>
        <end position="199"/>
    </location>
</feature>
<feature type="repeat" description="3-1">
    <location>
        <begin position="205"/>
        <end position="239"/>
    </location>
</feature>
<feature type="repeat" description="3-2">
    <location>
        <begin position="240"/>
        <end position="274"/>
    </location>
</feature>
<feature type="repeat" description="1-2">
    <location>
        <begin position="283"/>
        <end position="295"/>
    </location>
</feature>
<feature type="repeat" description="2-2">
    <location>
        <begin position="316"/>
        <end position="342"/>
    </location>
</feature>
<feature type="repeat" description="3-3">
    <location>
        <begin position="348"/>
        <end position="382"/>
    </location>
</feature>
<feature type="repeat" description="3-4">
    <location>
        <begin position="383"/>
        <end position="417"/>
    </location>
</feature>
<feature type="repeat" description="4-1">
    <location>
        <begin position="678"/>
        <end position="693"/>
    </location>
</feature>
<feature type="repeat" description="4-2">
    <location>
        <begin position="729"/>
        <end position="744"/>
    </location>
</feature>
<feature type="DNA-binding region" description="A.T hook 1">
    <location>
        <begin position="226"/>
        <end position="236"/>
    </location>
</feature>
<feature type="DNA-binding region" description="A.T hook 2">
    <location>
        <begin position="261"/>
        <end position="271"/>
    </location>
</feature>
<feature type="DNA-binding region" description="A.T hook 3">
    <location>
        <begin position="369"/>
        <end position="379"/>
    </location>
</feature>
<feature type="DNA-binding region" description="A.T hook 4">
    <location>
        <begin position="404"/>
        <end position="414"/>
    </location>
</feature>
<feature type="zinc finger region" description="PHD-type" evidence="2">
    <location>
        <begin position="578"/>
        <end position="635"/>
    </location>
</feature>
<feature type="DNA-binding region" description="Homeobox" evidence="1">
    <location>
        <begin position="935"/>
        <end position="994"/>
    </location>
</feature>
<feature type="region of interest" description="2 X 13 AA repeats">
    <location>
        <begin position="140"/>
        <end position="295"/>
    </location>
</feature>
<feature type="region of interest" description="2 X 27 AA approximate repeats">
    <location>
        <begin position="173"/>
        <end position="342"/>
    </location>
</feature>
<feature type="region of interest" description="2 X 35 AA approximate tandem repeats (type C)">
    <location>
        <begin position="205"/>
        <end position="274"/>
    </location>
</feature>
<feature type="region of interest" description="Disordered" evidence="3">
    <location>
        <begin position="220"/>
        <end position="282"/>
    </location>
</feature>
<feature type="region of interest" description="Disordered" evidence="3">
    <location>
        <begin position="303"/>
        <end position="343"/>
    </location>
</feature>
<feature type="region of interest" description="2 X 35 AA approximate tandem repeats (type C)">
    <location>
        <begin position="348"/>
        <end position="417"/>
    </location>
</feature>
<feature type="region of interest" description="Disordered" evidence="3">
    <location>
        <begin position="363"/>
        <end position="484"/>
    </location>
</feature>
<feature type="region of interest" description="Disordered" evidence="3">
    <location>
        <begin position="667"/>
        <end position="810"/>
    </location>
</feature>
<feature type="region of interest" description="2 X 16 AA Asp/Glu-rich (acidic) repeats">
    <location>
        <begin position="678"/>
        <end position="744"/>
    </location>
</feature>
<feature type="region of interest" description="Disordered" evidence="3">
    <location>
        <begin position="851"/>
        <end position="901"/>
    </location>
</feature>
<feature type="compositionally biased region" description="Polar residues" evidence="3">
    <location>
        <begin position="272"/>
        <end position="282"/>
    </location>
</feature>
<feature type="compositionally biased region" description="Polar residues" evidence="3">
    <location>
        <begin position="303"/>
        <end position="320"/>
    </location>
</feature>
<feature type="compositionally biased region" description="Acidic residues" evidence="3">
    <location>
        <begin position="705"/>
        <end position="718"/>
    </location>
</feature>
<feature type="compositionally biased region" description="Basic and acidic residues" evidence="3">
    <location>
        <begin position="788"/>
        <end position="802"/>
    </location>
</feature>
<feature type="compositionally biased region" description="Basic and acidic residues" evidence="3">
    <location>
        <begin position="874"/>
        <end position="901"/>
    </location>
</feature>
<sequence length="1088" mass="121014">MEEISDPKPNALEQVLPTVPNGKCTAPVQMESLAVDVQKVSGEAKVRICSCWCEIVRSPEDLTKLVPCNDFAEDIKLFDSDPMQQEAESSIGIPLIPKQVTMSHNHDHESGSEMVSNEVMQENHVIATENTYQKSDFDRINMGQKETMPEEVIHKSFLESSTSSIDILLNNHNSYQSGLPPENAVTDCKQVQLGHRSDDAIKNSGLVELVIGQKNVAKSPSQLVETGKRGRGRPRKVQTGLEQLVIGQKTAAKSSSQLGDTGKRSRGRPRKVQNSPTSFLENINMEQKETIPEQVTQNSILESLTIPTDNQSRTYNSDQSELPPENAAKNCNHAQFGHQSDDTTKISGFKELVIGQETVAKSPSQLVDAGKRGRGRPRKVQTGLEQLVPVQETAAKSSSQLGDTGKRSRGRPRKVQDSPTSLGGNVKVVPEKGKDSQELSVNSSRSLRSRSQEKSIEPDVNNIVADEGADREKPRKKRKKRMEENRVDEFCRIRTHLRYLLHRIKYEKNFLDAYSGEGWKGQSLDKIKPEKELKRAKAEIFGRKLKIRDLFQRLDLARSEGRLPEILFDSRGEIDSEDIFCAKCGSKDVTLSNDIILCDGACDRGFHQFCLDPPLLKEYIPPDDEGWLCPGCECKIDCIKLLNDSQETNILLGDSWEKVFAEEAAAAASGKNLDDNSGLPSDDSEDDDYDPGGPDLDEKVQGDDSSTDESDYQSESDDMQVIRQKNSRGLPSDDSEDDEYDPSGLVTDQMYKDSSCSDFTSDSEDFTGVFDDYKDTGKAQGPLASTPDHVRNNEEGCGHPEQGDTAPLYPRRQVESLDYKKLNDIEFSKMCDILDILSSQLDVIICTGNQEEYGNTSSDSSDEDYMVTSSPDKNNSDKEATAMERGRESGDLELDQKARESTHNRRYIKKFAVEGTDSFLSRSCEDSAAPVAGSKSTSKTLHGEHATQRLLQSFKENQYPQRAVKESLAAELALSVRQVSNWFNNRRWSFRHSSRIGSDVAKFDSNDTPRQKSIDMSGPSLKSVLDSATYSEIEKKEQDTASLGLTEGCDRYMTLNMVADEGNVHTPCIAETREEKTEVGIKPQQNPL</sequence>
<name>PRH_PETCR</name>
<protein>
    <recommendedName>
        <fullName>Pathogenesis-related homeodomain protein</fullName>
        <shortName>PRHP</shortName>
    </recommendedName>
</protein>
<gene>
    <name type="primary">PRH</name>
</gene>
<proteinExistence type="evidence at transcript level"/>
<evidence type="ECO:0000255" key="1">
    <source>
        <dbReference type="PROSITE-ProRule" id="PRU00108"/>
    </source>
</evidence>
<evidence type="ECO:0000255" key="2">
    <source>
        <dbReference type="PROSITE-ProRule" id="PRU00146"/>
    </source>
</evidence>
<evidence type="ECO:0000256" key="3">
    <source>
        <dbReference type="SAM" id="MobiDB-lite"/>
    </source>
</evidence>
<evidence type="ECO:0000305" key="4"/>
<reference key="1">
    <citation type="journal article" date="1994" name="Plant Cell">
        <title>Plant homeodomain protein involved in transcriptional regulation of a pathogen defense-related gene.</title>
        <authorList>
            <person name="Korfhage U."/>
            <person name="Trezzini G.F."/>
            <person name="Meier I."/>
            <person name="Hahlbrock K."/>
            <person name="Somssich I.E."/>
        </authorList>
    </citation>
    <scope>NUCLEOTIDE SEQUENCE [MRNA]</scope>
</reference>
<organism>
    <name type="scientific">Petroselinum crispum</name>
    <name type="common">Parsley</name>
    <name type="synonym">Petroselinum hortense</name>
    <dbReference type="NCBI Taxonomy" id="4043"/>
    <lineage>
        <taxon>Eukaryota</taxon>
        <taxon>Viridiplantae</taxon>
        <taxon>Streptophyta</taxon>
        <taxon>Embryophyta</taxon>
        <taxon>Tracheophyta</taxon>
        <taxon>Spermatophyta</taxon>
        <taxon>Magnoliopsida</taxon>
        <taxon>eudicotyledons</taxon>
        <taxon>Gunneridae</taxon>
        <taxon>Pentapetalae</taxon>
        <taxon>asterids</taxon>
        <taxon>campanulids</taxon>
        <taxon>Apiales</taxon>
        <taxon>Apiaceae</taxon>
        <taxon>Apioideae</taxon>
        <taxon>apioid superclade</taxon>
        <taxon>Apieae</taxon>
        <taxon>Petroselinum</taxon>
    </lineage>
</organism>